<evidence type="ECO:0000250" key="1">
    <source>
        <dbReference type="UniProtKB" id="Q9SF32"/>
    </source>
</evidence>
<evidence type="ECO:0000255" key="2">
    <source>
        <dbReference type="PROSITE-ProRule" id="PRU00116"/>
    </source>
</evidence>
<evidence type="ECO:0000255" key="3">
    <source>
        <dbReference type="PROSITE-ProRule" id="PRU00768"/>
    </source>
</evidence>
<evidence type="ECO:0000256" key="4">
    <source>
        <dbReference type="SAM" id="MobiDB-lite"/>
    </source>
</evidence>
<evidence type="ECO:0000269" key="5">
    <source>
    </source>
</evidence>
<evidence type="ECO:0000303" key="6">
    <source>
    </source>
</evidence>
<evidence type="ECO:0000305" key="7"/>
<evidence type="ECO:0000312" key="8">
    <source>
        <dbReference type="Araport" id="AT1G17480"/>
    </source>
</evidence>
<evidence type="ECO:0000312" key="9">
    <source>
        <dbReference type="EMBL" id="AAF79484.1"/>
    </source>
</evidence>
<evidence type="ECO:0000312" key="10">
    <source>
        <dbReference type="EMBL" id="AAF97308.1"/>
    </source>
</evidence>
<protein>
    <recommendedName>
        <fullName evidence="6">Protein IQ-DOMAIN 7</fullName>
        <shortName evidence="6">AtIQD7</shortName>
    </recommendedName>
</protein>
<dbReference type="EMBL" id="AY702665">
    <property type="protein sequence ID" value="AAW22635.1"/>
    <property type="molecule type" value="mRNA"/>
</dbReference>
<dbReference type="EMBL" id="AC007843">
    <property type="protein sequence ID" value="AAF97308.1"/>
    <property type="status" value="ALT_SEQ"/>
    <property type="molecule type" value="Genomic_DNA"/>
</dbReference>
<dbReference type="EMBL" id="AC022492">
    <property type="protein sequence ID" value="AAF79484.1"/>
    <property type="status" value="ALT_SEQ"/>
    <property type="molecule type" value="Genomic_DNA"/>
</dbReference>
<dbReference type="EMBL" id="CP002684">
    <property type="protein sequence ID" value="AEE29597.1"/>
    <property type="molecule type" value="Genomic_DNA"/>
</dbReference>
<dbReference type="EMBL" id="BT032868">
    <property type="protein sequence ID" value="ACD85594.1"/>
    <property type="molecule type" value="mRNA"/>
</dbReference>
<dbReference type="PIR" id="C86311">
    <property type="entry name" value="C86311"/>
</dbReference>
<dbReference type="RefSeq" id="NP_173191.2">
    <property type="nucleotide sequence ID" value="NM_101610.3"/>
</dbReference>
<dbReference type="SMR" id="Q2NND9"/>
<dbReference type="FunCoup" id="Q2NND9">
    <property type="interactions" value="3"/>
</dbReference>
<dbReference type="STRING" id="3702.Q2NND9"/>
<dbReference type="PaxDb" id="3702-AT1G17480.1"/>
<dbReference type="EnsemblPlants" id="AT1G17480.1">
    <property type="protein sequence ID" value="AT1G17480.1"/>
    <property type="gene ID" value="AT1G17480"/>
</dbReference>
<dbReference type="GeneID" id="838321"/>
<dbReference type="Gramene" id="AT1G17480.1">
    <property type="protein sequence ID" value="AT1G17480.1"/>
    <property type="gene ID" value="AT1G17480"/>
</dbReference>
<dbReference type="KEGG" id="ath:AT1G17480"/>
<dbReference type="Araport" id="AT1G17480"/>
<dbReference type="TAIR" id="AT1G17480">
    <property type="gene designation" value="IQD7"/>
</dbReference>
<dbReference type="eggNOG" id="ENOG502SIC6">
    <property type="taxonomic scope" value="Eukaryota"/>
</dbReference>
<dbReference type="HOGENOM" id="CLU_037259_0_1_1"/>
<dbReference type="InParanoid" id="Q2NND9"/>
<dbReference type="OMA" id="MNWTKSA"/>
<dbReference type="PhylomeDB" id="Q2NND9"/>
<dbReference type="PRO" id="PR:Q2NND9"/>
<dbReference type="Proteomes" id="UP000006548">
    <property type="component" value="Chromosome 1"/>
</dbReference>
<dbReference type="ExpressionAtlas" id="Q2NND9">
    <property type="expression patterns" value="baseline and differential"/>
</dbReference>
<dbReference type="GO" id="GO:0005635">
    <property type="term" value="C:nuclear envelope"/>
    <property type="evidence" value="ECO:0007669"/>
    <property type="project" value="UniProtKB-SubCell"/>
</dbReference>
<dbReference type="GO" id="GO:0009524">
    <property type="term" value="C:phragmoplast"/>
    <property type="evidence" value="ECO:0000314"/>
    <property type="project" value="TAIR"/>
</dbReference>
<dbReference type="GO" id="GO:0009574">
    <property type="term" value="C:preprophase band"/>
    <property type="evidence" value="ECO:0000314"/>
    <property type="project" value="TAIR"/>
</dbReference>
<dbReference type="GO" id="GO:0005516">
    <property type="term" value="F:calmodulin binding"/>
    <property type="evidence" value="ECO:0007669"/>
    <property type="project" value="UniProtKB-KW"/>
</dbReference>
<dbReference type="GO" id="GO:0007105">
    <property type="term" value="P:cytokinesis, division site positioning"/>
    <property type="evidence" value="ECO:0000314"/>
    <property type="project" value="TAIR"/>
</dbReference>
<dbReference type="CDD" id="cd23767">
    <property type="entry name" value="IQCD"/>
    <property type="match status" value="1"/>
</dbReference>
<dbReference type="Gene3D" id="1.20.5.190">
    <property type="match status" value="1"/>
</dbReference>
<dbReference type="InterPro" id="IPR000048">
    <property type="entry name" value="IQ_motif_EF-hand-BS"/>
</dbReference>
<dbReference type="InterPro" id="IPR027417">
    <property type="entry name" value="P-loop_NTPase"/>
</dbReference>
<dbReference type="PANTHER" id="PTHR32295">
    <property type="entry name" value="IQ-DOMAIN 5-RELATED"/>
    <property type="match status" value="1"/>
</dbReference>
<dbReference type="PANTHER" id="PTHR32295:SF143">
    <property type="entry name" value="PROTEIN IQ-DOMAIN 7"/>
    <property type="match status" value="1"/>
</dbReference>
<dbReference type="Pfam" id="PF00612">
    <property type="entry name" value="IQ"/>
    <property type="match status" value="2"/>
</dbReference>
<dbReference type="SMART" id="SM00015">
    <property type="entry name" value="IQ"/>
    <property type="match status" value="2"/>
</dbReference>
<dbReference type="SUPFAM" id="SSF52540">
    <property type="entry name" value="P-loop containing nucleoside triphosphate hydrolases"/>
    <property type="match status" value="1"/>
</dbReference>
<dbReference type="PROSITE" id="PS50096">
    <property type="entry name" value="IQ"/>
    <property type="match status" value="2"/>
</dbReference>
<gene>
    <name evidence="6" type="primary">IQD7</name>
    <name evidence="8" type="ordered locus">At1g17480</name>
    <name evidence="9" type="ORF">F1L3.18</name>
    <name evidence="10" type="ORF">F28G4.3</name>
</gene>
<organism>
    <name type="scientific">Arabidopsis thaliana</name>
    <name type="common">Mouse-ear cress</name>
    <dbReference type="NCBI Taxonomy" id="3702"/>
    <lineage>
        <taxon>Eukaryota</taxon>
        <taxon>Viridiplantae</taxon>
        <taxon>Streptophyta</taxon>
        <taxon>Embryophyta</taxon>
        <taxon>Tracheophyta</taxon>
        <taxon>Spermatophyta</taxon>
        <taxon>Magnoliopsida</taxon>
        <taxon>eudicotyledons</taxon>
        <taxon>Gunneridae</taxon>
        <taxon>Pentapetalae</taxon>
        <taxon>rosids</taxon>
        <taxon>malvids</taxon>
        <taxon>Brassicales</taxon>
        <taxon>Brassicaceae</taxon>
        <taxon>Camelineae</taxon>
        <taxon>Arabidopsis</taxon>
    </lineage>
</organism>
<feature type="chain" id="PRO_0000453114" description="Protein IQ-DOMAIN 7">
    <location>
        <begin position="1"/>
        <end position="371"/>
    </location>
</feature>
<feature type="domain" description="IQ 1" evidence="2">
    <location>
        <begin position="93"/>
        <end position="121"/>
    </location>
</feature>
<feature type="domain" description="IQ 2" evidence="2">
    <location>
        <begin position="122"/>
        <end position="144"/>
    </location>
</feature>
<feature type="region of interest" description="Disordered" evidence="4">
    <location>
        <begin position="1"/>
        <end position="32"/>
    </location>
</feature>
<feature type="region of interest" description="Calmodulin-binding" evidence="6">
    <location>
        <begin position="125"/>
        <end position="141"/>
    </location>
</feature>
<feature type="region of interest" description="Disordered" evidence="4">
    <location>
        <begin position="285"/>
        <end position="308"/>
    </location>
</feature>
<feature type="region of interest" description="Disordered" evidence="4">
    <location>
        <begin position="327"/>
        <end position="371"/>
    </location>
</feature>
<feature type="compositionally biased region" description="Basic and acidic residues" evidence="4">
    <location>
        <begin position="17"/>
        <end position="29"/>
    </location>
</feature>
<feature type="compositionally biased region" description="Polar residues" evidence="4">
    <location>
        <begin position="297"/>
        <end position="308"/>
    </location>
</feature>
<feature type="compositionally biased region" description="Polar residues" evidence="4">
    <location>
        <begin position="327"/>
        <end position="341"/>
    </location>
</feature>
<accession>Q2NND9</accession>
<accession>Q9LNQ7</accession>
<accession>Q9LQK1</accession>
<keyword id="KW-0112">Calmodulin-binding</keyword>
<keyword id="KW-0963">Cytoplasm</keyword>
<keyword id="KW-0206">Cytoskeleton</keyword>
<keyword id="KW-0539">Nucleus</keyword>
<keyword id="KW-1185">Reference proteome</keyword>
<keyword id="KW-0677">Repeat</keyword>
<proteinExistence type="evidence at protein level"/>
<reference key="1">
    <citation type="journal article" date="2005" name="BMC Evol. Biol.">
        <title>Genome-wide comparative analysis of the IQD gene families in Arabidopsis thaliana and Oryza sativa.</title>
        <authorList>
            <person name="Abel S."/>
            <person name="Savchenko T."/>
            <person name="Levy M."/>
        </authorList>
    </citation>
    <scope>NUCLEOTIDE SEQUENCE [MRNA]</scope>
    <scope>INTERACTION WITH CALMODULIN</scope>
    <scope>GENE FAMILY</scope>
    <scope>NOMENCLATURE</scope>
    <source>
        <strain>cv. Columbia</strain>
    </source>
</reference>
<reference key="2">
    <citation type="journal article" date="2000" name="Nature">
        <title>Sequence and analysis of chromosome 1 of the plant Arabidopsis thaliana.</title>
        <authorList>
            <person name="Theologis A."/>
            <person name="Ecker J.R."/>
            <person name="Palm C.J."/>
            <person name="Federspiel N.A."/>
            <person name="Kaul S."/>
            <person name="White O."/>
            <person name="Alonso J."/>
            <person name="Altafi H."/>
            <person name="Araujo R."/>
            <person name="Bowman C.L."/>
            <person name="Brooks S.Y."/>
            <person name="Buehler E."/>
            <person name="Chan A."/>
            <person name="Chao Q."/>
            <person name="Chen H."/>
            <person name="Cheuk R.F."/>
            <person name="Chin C.W."/>
            <person name="Chung M.K."/>
            <person name="Conn L."/>
            <person name="Conway A.B."/>
            <person name="Conway A.R."/>
            <person name="Creasy T.H."/>
            <person name="Dewar K."/>
            <person name="Dunn P."/>
            <person name="Etgu P."/>
            <person name="Feldblyum T.V."/>
            <person name="Feng J.-D."/>
            <person name="Fong B."/>
            <person name="Fujii C.Y."/>
            <person name="Gill J.E."/>
            <person name="Goldsmith A.D."/>
            <person name="Haas B."/>
            <person name="Hansen N.F."/>
            <person name="Hughes B."/>
            <person name="Huizar L."/>
            <person name="Hunter J.L."/>
            <person name="Jenkins J."/>
            <person name="Johnson-Hopson C."/>
            <person name="Khan S."/>
            <person name="Khaykin E."/>
            <person name="Kim C.J."/>
            <person name="Koo H.L."/>
            <person name="Kremenetskaia I."/>
            <person name="Kurtz D.B."/>
            <person name="Kwan A."/>
            <person name="Lam B."/>
            <person name="Langin-Hooper S."/>
            <person name="Lee A."/>
            <person name="Lee J.M."/>
            <person name="Lenz C.A."/>
            <person name="Li J.H."/>
            <person name="Li Y.-P."/>
            <person name="Lin X."/>
            <person name="Liu S.X."/>
            <person name="Liu Z.A."/>
            <person name="Luros J.S."/>
            <person name="Maiti R."/>
            <person name="Marziali A."/>
            <person name="Militscher J."/>
            <person name="Miranda M."/>
            <person name="Nguyen M."/>
            <person name="Nierman W.C."/>
            <person name="Osborne B.I."/>
            <person name="Pai G."/>
            <person name="Peterson J."/>
            <person name="Pham P.K."/>
            <person name="Rizzo M."/>
            <person name="Rooney T."/>
            <person name="Rowley D."/>
            <person name="Sakano H."/>
            <person name="Salzberg S.L."/>
            <person name="Schwartz J.R."/>
            <person name="Shinn P."/>
            <person name="Southwick A.M."/>
            <person name="Sun H."/>
            <person name="Tallon L.J."/>
            <person name="Tambunga G."/>
            <person name="Toriumi M.J."/>
            <person name="Town C.D."/>
            <person name="Utterback T."/>
            <person name="Van Aken S."/>
            <person name="Vaysberg M."/>
            <person name="Vysotskaia V.S."/>
            <person name="Walker M."/>
            <person name="Wu D."/>
            <person name="Yu G."/>
            <person name="Fraser C.M."/>
            <person name="Venter J.C."/>
            <person name="Davis R.W."/>
        </authorList>
    </citation>
    <scope>NUCLEOTIDE SEQUENCE [LARGE SCALE GENOMIC DNA]</scope>
    <source>
        <strain>cv. Columbia</strain>
    </source>
</reference>
<reference key="3">
    <citation type="journal article" date="2017" name="Plant J.">
        <title>Araport11: a complete reannotation of the Arabidopsis thaliana reference genome.</title>
        <authorList>
            <person name="Cheng C.Y."/>
            <person name="Krishnakumar V."/>
            <person name="Chan A.P."/>
            <person name="Thibaud-Nissen F."/>
            <person name="Schobel S."/>
            <person name="Town C.D."/>
        </authorList>
    </citation>
    <scope>GENOME REANNOTATION</scope>
    <source>
        <strain>cv. Columbia</strain>
    </source>
</reference>
<reference key="4">
    <citation type="submission" date="2008-06" db="EMBL/GenBank/DDBJ databases">
        <title>Arabidopsis ORF clones.</title>
        <authorList>
            <person name="de los Reyes C."/>
            <person name="Quan R."/>
            <person name="Chen H."/>
            <person name="Bautista V."/>
            <person name="Kim C.J."/>
            <person name="Ecker J.R."/>
        </authorList>
    </citation>
    <scope>NUCLEOTIDE SEQUENCE [LARGE SCALE MRNA]</scope>
    <source>
        <strain>cv. Columbia</strain>
    </source>
</reference>
<reference key="5">
    <citation type="journal article" date="2017" name="Plant Physiol.">
        <title>The IQD family of calmodulin-binding proteins links calcium signaling to microtubules, membrane subdomains, and the nucleus.</title>
        <authorList>
            <person name="Buerstenbinder K."/>
            <person name="Moeller B."/>
            <person name="Ploetner R."/>
            <person name="Stamm G."/>
            <person name="Hause G."/>
            <person name="Mitra D."/>
            <person name="Abel S."/>
        </authorList>
    </citation>
    <scope>SUBCELLULAR LOCATION</scope>
    <source>
        <strain>cv. Columbia</strain>
    </source>
</reference>
<reference key="6">
    <citation type="journal article" date="2017" name="Plant Signal. Behav.">
        <title>Functions of IQD proteins as hubs in cellular calcium and auxin signaling: A toolbox for shape formation and tissue-specification in plants?</title>
        <authorList>
            <person name="Buerstenbinder K."/>
            <person name="Mitra D."/>
            <person name="Quegwer J."/>
        </authorList>
    </citation>
    <scope>REVIEW</scope>
</reference>
<sequence>MGGSGNWIRSLISNRKPVNDQQEKLSDKSSKKKWKLWRISSESLASSSFKSRGSYAASSLGSELPSFSADEAFTTAMAALIRAPPRDFLMVKREWASTRIQAAFRAFLARQAFRALKAVVRIQAIFRGRQVRKQAAVTLRCMQALVRVQSRVRAHRRAPSDSLELKDPVKQTEKGWCGSPRSIKEVKTKLQMKQEGAIKRERAMVYALTHQSRTCPSPSGRAITHHGLRKSSPGWNWYDDVGTFSRKSSESSVLSEYETVTVRKNNLSSTRVLARPPLLLPPVSSGMSYDSLHDETSTSSTSQSPVAFSSSVLDGGGYYRKPSYMSLTQSTQAKQRQSGLSCNGDARRSAGSDQCTDLYPPGNVWAKSQRS</sequence>
<name>IQD7_ARATH</name>
<comment type="function">
    <text evidence="1">May be involved in cooperative interactions with calmodulins or calmodulin-like proteins (By similarity). Recruits calmodulin proteins to microtubules, thus being a potential scaffold in cellular signaling and trafficking (By similarity). May associate with nucleic acids and regulate gene expression at the transcriptional or post-transcriptional level (By similarity).</text>
</comment>
<comment type="subunit">
    <text evidence="1">Binds to multiple calmodulin (CaM) in the presence of Ca(2+) and CaM-like proteins.</text>
</comment>
<comment type="subcellular location">
    <subcellularLocation>
        <location evidence="3">Nucleus</location>
    </subcellularLocation>
    <subcellularLocation>
        <location evidence="5">Nucleus envelope</location>
    </subcellularLocation>
    <subcellularLocation>
        <location evidence="5">Cytoplasm</location>
        <location evidence="5">Cytoskeleton</location>
    </subcellularLocation>
</comment>
<comment type="similarity">
    <text evidence="7">Belongs to the IQD family.</text>
</comment>
<comment type="sequence caution" evidence="7">
    <conflict type="erroneous gene model prediction">
        <sequence resource="EMBL-CDS" id="AAF79484"/>
    </conflict>
</comment>
<comment type="sequence caution" evidence="7">
    <conflict type="erroneous gene model prediction">
        <sequence resource="EMBL-CDS" id="AAF97308"/>
    </conflict>
</comment>